<proteinExistence type="inferred from homology"/>
<comment type="catalytic activity">
    <reaction evidence="1">
        <text>diphosphate + H2O = 2 phosphate + H(+)</text>
        <dbReference type="Rhea" id="RHEA:24576"/>
        <dbReference type="ChEBI" id="CHEBI:15377"/>
        <dbReference type="ChEBI" id="CHEBI:15378"/>
        <dbReference type="ChEBI" id="CHEBI:33019"/>
        <dbReference type="ChEBI" id="CHEBI:43474"/>
        <dbReference type="EC" id="3.6.1.1"/>
    </reaction>
</comment>
<comment type="cofactor">
    <cofactor evidence="1">
        <name>Mn(2+)</name>
        <dbReference type="ChEBI" id="CHEBI:29035"/>
    </cofactor>
    <text evidence="1">Binds 2 manganese ions per subunit.</text>
</comment>
<comment type="subcellular location">
    <subcellularLocation>
        <location evidence="1">Cytoplasm</location>
    </subcellularLocation>
</comment>
<comment type="similarity">
    <text evidence="1">Belongs to the PPase class C family.</text>
</comment>
<protein>
    <recommendedName>
        <fullName evidence="1">Probable manganese-dependent inorganic pyrophosphatase</fullName>
        <ecNumber evidence="1">3.6.1.1</ecNumber>
    </recommendedName>
    <alternativeName>
        <fullName evidence="1">Pyrophosphate phospho-hydrolase</fullName>
        <shortName evidence="1">PPase</shortName>
    </alternativeName>
</protein>
<sequence>MAKELIFGHQNPDTDAIGTAIAYSYLQNKLGYDTEAVALGEANDETKYALNKFGFTAPRVIKTASNEVDAVMLVDHNEPQQSVSDIDKVKVTHVVDHHRIMNFNTADPLYYRAAPVGCTSTIMWQMYNEKEIEIPQDIAGIMLSAIISDTLLLKSPTTTDQDKEAVEALANIAGVNYKEYGLKMLKAGTNIADKSEEDLIDLDAKSFELNGSNVRVAQINVVDLPEALERKEAFLKAMDEASKSEGYDMFMLLITNILDSDSEALVVGSDESKAKFEKAFNTKLSDSEVKLPGVVSRKKQVVPPLTNAFEA</sequence>
<name>PPAC_LACGA</name>
<gene>
    <name evidence="1" type="primary">ppaC</name>
    <name type="ordered locus">LGAS_1002</name>
</gene>
<reference key="1">
    <citation type="journal article" date="2006" name="Proc. Natl. Acad. Sci. U.S.A.">
        <title>Comparative genomics of the lactic acid bacteria.</title>
        <authorList>
            <person name="Makarova K.S."/>
            <person name="Slesarev A."/>
            <person name="Wolf Y.I."/>
            <person name="Sorokin A."/>
            <person name="Mirkin B."/>
            <person name="Koonin E.V."/>
            <person name="Pavlov A."/>
            <person name="Pavlova N."/>
            <person name="Karamychev V."/>
            <person name="Polouchine N."/>
            <person name="Shakhova V."/>
            <person name="Grigoriev I."/>
            <person name="Lou Y."/>
            <person name="Rohksar D."/>
            <person name="Lucas S."/>
            <person name="Huang K."/>
            <person name="Goodstein D.M."/>
            <person name="Hawkins T."/>
            <person name="Plengvidhya V."/>
            <person name="Welker D."/>
            <person name="Hughes J."/>
            <person name="Goh Y."/>
            <person name="Benson A."/>
            <person name="Baldwin K."/>
            <person name="Lee J.-H."/>
            <person name="Diaz-Muniz I."/>
            <person name="Dosti B."/>
            <person name="Smeianov V."/>
            <person name="Wechter W."/>
            <person name="Barabote R."/>
            <person name="Lorca G."/>
            <person name="Altermann E."/>
            <person name="Barrangou R."/>
            <person name="Ganesan B."/>
            <person name="Xie Y."/>
            <person name="Rawsthorne H."/>
            <person name="Tamir D."/>
            <person name="Parker C."/>
            <person name="Breidt F."/>
            <person name="Broadbent J.R."/>
            <person name="Hutkins R."/>
            <person name="O'Sullivan D."/>
            <person name="Steele J."/>
            <person name="Unlu G."/>
            <person name="Saier M.H. Jr."/>
            <person name="Klaenhammer T."/>
            <person name="Richardson P."/>
            <person name="Kozyavkin S."/>
            <person name="Weimer B.C."/>
            <person name="Mills D.A."/>
        </authorList>
    </citation>
    <scope>NUCLEOTIDE SEQUENCE [LARGE SCALE GENOMIC DNA]</scope>
    <source>
        <strain>ATCC 33323 / DSM 20243 / BCRC 14619 / CIP 102991 / JCM 1131 / KCTC 3163 / NCIMB 11718 / NCTC 13722 / AM63</strain>
    </source>
</reference>
<dbReference type="EC" id="3.6.1.1" evidence="1"/>
<dbReference type="EMBL" id="CP000413">
    <property type="protein sequence ID" value="ABJ60378.1"/>
    <property type="molecule type" value="Genomic_DNA"/>
</dbReference>
<dbReference type="RefSeq" id="WP_003647301.1">
    <property type="nucleotide sequence ID" value="NZ_WBMG01000013.1"/>
</dbReference>
<dbReference type="SMR" id="Q043J4"/>
<dbReference type="KEGG" id="lga:LGAS_1002"/>
<dbReference type="HOGENOM" id="CLU_025243_0_1_9"/>
<dbReference type="BioCyc" id="LGAS324831:G1G6Y-1002-MONOMER"/>
<dbReference type="Proteomes" id="UP000000664">
    <property type="component" value="Chromosome"/>
</dbReference>
<dbReference type="GO" id="GO:0005737">
    <property type="term" value="C:cytoplasm"/>
    <property type="evidence" value="ECO:0007669"/>
    <property type="project" value="UniProtKB-SubCell"/>
</dbReference>
<dbReference type="GO" id="GO:0004427">
    <property type="term" value="F:inorganic diphosphate phosphatase activity"/>
    <property type="evidence" value="ECO:0007669"/>
    <property type="project" value="UniProtKB-UniRule"/>
</dbReference>
<dbReference type="GO" id="GO:0030145">
    <property type="term" value="F:manganese ion binding"/>
    <property type="evidence" value="ECO:0007669"/>
    <property type="project" value="UniProtKB-UniRule"/>
</dbReference>
<dbReference type="FunFam" id="3.10.310.20:FF:000001">
    <property type="entry name" value="Probable manganese-dependent inorganic pyrophosphatase"/>
    <property type="match status" value="1"/>
</dbReference>
<dbReference type="FunFam" id="3.90.1640.10:FF:000001">
    <property type="entry name" value="Probable manganese-dependent inorganic pyrophosphatase"/>
    <property type="match status" value="1"/>
</dbReference>
<dbReference type="Gene3D" id="3.10.310.20">
    <property type="entry name" value="DHHA2 domain"/>
    <property type="match status" value="1"/>
</dbReference>
<dbReference type="Gene3D" id="3.90.1640.10">
    <property type="entry name" value="inorganic pyrophosphatase (n-terminal core)"/>
    <property type="match status" value="1"/>
</dbReference>
<dbReference type="HAMAP" id="MF_00207">
    <property type="entry name" value="PPase_C"/>
    <property type="match status" value="1"/>
</dbReference>
<dbReference type="InterPro" id="IPR001667">
    <property type="entry name" value="DDH_dom"/>
</dbReference>
<dbReference type="InterPro" id="IPR038763">
    <property type="entry name" value="DHH_sf"/>
</dbReference>
<dbReference type="InterPro" id="IPR004097">
    <property type="entry name" value="DHHA2"/>
</dbReference>
<dbReference type="InterPro" id="IPR038222">
    <property type="entry name" value="DHHA2_dom_sf"/>
</dbReference>
<dbReference type="InterPro" id="IPR022934">
    <property type="entry name" value="Mn-dep_inorganic_PyrPase"/>
</dbReference>
<dbReference type="NCBIfam" id="NF003877">
    <property type="entry name" value="PRK05427.1"/>
    <property type="match status" value="1"/>
</dbReference>
<dbReference type="PANTHER" id="PTHR12112">
    <property type="entry name" value="BNIP - RELATED"/>
    <property type="match status" value="1"/>
</dbReference>
<dbReference type="PANTHER" id="PTHR12112:SF22">
    <property type="entry name" value="MANGANESE-DEPENDENT INORGANIC PYROPHOSPHATASE-RELATED"/>
    <property type="match status" value="1"/>
</dbReference>
<dbReference type="Pfam" id="PF01368">
    <property type="entry name" value="DHH"/>
    <property type="match status" value="1"/>
</dbReference>
<dbReference type="Pfam" id="PF02833">
    <property type="entry name" value="DHHA2"/>
    <property type="match status" value="1"/>
</dbReference>
<dbReference type="SMART" id="SM01131">
    <property type="entry name" value="DHHA2"/>
    <property type="match status" value="1"/>
</dbReference>
<dbReference type="SUPFAM" id="SSF64182">
    <property type="entry name" value="DHH phosphoesterases"/>
    <property type="match status" value="1"/>
</dbReference>
<keyword id="KW-0963">Cytoplasm</keyword>
<keyword id="KW-0378">Hydrolase</keyword>
<keyword id="KW-0464">Manganese</keyword>
<keyword id="KW-0479">Metal-binding</keyword>
<accession>Q043J4</accession>
<evidence type="ECO:0000255" key="1">
    <source>
        <dbReference type="HAMAP-Rule" id="MF_00207"/>
    </source>
</evidence>
<feature type="chain" id="PRO_1000012315" description="Probable manganese-dependent inorganic pyrophosphatase">
    <location>
        <begin position="1"/>
        <end position="311"/>
    </location>
</feature>
<feature type="binding site" evidence="1">
    <location>
        <position position="9"/>
    </location>
    <ligand>
        <name>Mn(2+)</name>
        <dbReference type="ChEBI" id="CHEBI:29035"/>
        <label>1</label>
    </ligand>
</feature>
<feature type="binding site" evidence="1">
    <location>
        <position position="13"/>
    </location>
    <ligand>
        <name>Mn(2+)</name>
        <dbReference type="ChEBI" id="CHEBI:29035"/>
        <label>1</label>
    </ligand>
</feature>
<feature type="binding site" evidence="1">
    <location>
        <position position="15"/>
    </location>
    <ligand>
        <name>Mn(2+)</name>
        <dbReference type="ChEBI" id="CHEBI:29035"/>
        <label>2</label>
    </ligand>
</feature>
<feature type="binding site" evidence="1">
    <location>
        <position position="75"/>
    </location>
    <ligand>
        <name>Mn(2+)</name>
        <dbReference type="ChEBI" id="CHEBI:29035"/>
        <label>1</label>
    </ligand>
</feature>
<feature type="binding site" evidence="1">
    <location>
        <position position="75"/>
    </location>
    <ligand>
        <name>Mn(2+)</name>
        <dbReference type="ChEBI" id="CHEBI:29035"/>
        <label>2</label>
    </ligand>
</feature>
<feature type="binding site" evidence="1">
    <location>
        <position position="97"/>
    </location>
    <ligand>
        <name>Mn(2+)</name>
        <dbReference type="ChEBI" id="CHEBI:29035"/>
        <label>2</label>
    </ligand>
</feature>
<feature type="binding site" evidence="1">
    <location>
        <position position="149"/>
    </location>
    <ligand>
        <name>Mn(2+)</name>
        <dbReference type="ChEBI" id="CHEBI:29035"/>
        <label>2</label>
    </ligand>
</feature>
<organism>
    <name type="scientific">Lactobacillus gasseri (strain ATCC 33323 / DSM 20243 / BCRC 14619 / CIP 102991 / JCM 1131 / KCTC 3163 / NCIMB 11718 / NCTC 13722 / AM63)</name>
    <dbReference type="NCBI Taxonomy" id="324831"/>
    <lineage>
        <taxon>Bacteria</taxon>
        <taxon>Bacillati</taxon>
        <taxon>Bacillota</taxon>
        <taxon>Bacilli</taxon>
        <taxon>Lactobacillales</taxon>
        <taxon>Lactobacillaceae</taxon>
        <taxon>Lactobacillus</taxon>
    </lineage>
</organism>